<organism>
    <name type="scientific">Halorhodospira halophila (strain DSM 244 / SL1)</name>
    <name type="common">Ectothiorhodospira halophila (strain DSM 244 / SL1)</name>
    <dbReference type="NCBI Taxonomy" id="349124"/>
    <lineage>
        <taxon>Bacteria</taxon>
        <taxon>Pseudomonadati</taxon>
        <taxon>Pseudomonadota</taxon>
        <taxon>Gammaproteobacteria</taxon>
        <taxon>Chromatiales</taxon>
        <taxon>Ectothiorhodospiraceae</taxon>
        <taxon>Halorhodospira</taxon>
    </lineage>
</organism>
<comment type="function">
    <text evidence="1">Catalyzes the isomerization of sedoheptulose 7-phosphate in D-glycero-D-manno-heptose 7-phosphate.</text>
</comment>
<comment type="catalytic activity">
    <reaction evidence="1">
        <text>2 D-sedoheptulose 7-phosphate = D-glycero-alpha-D-manno-heptose 7-phosphate + D-glycero-beta-D-manno-heptose 7-phosphate</text>
        <dbReference type="Rhea" id="RHEA:27489"/>
        <dbReference type="ChEBI" id="CHEBI:57483"/>
        <dbReference type="ChEBI" id="CHEBI:60203"/>
        <dbReference type="ChEBI" id="CHEBI:60204"/>
        <dbReference type="EC" id="5.3.1.28"/>
    </reaction>
</comment>
<comment type="cofactor">
    <cofactor evidence="1">
        <name>Zn(2+)</name>
        <dbReference type="ChEBI" id="CHEBI:29105"/>
    </cofactor>
    <text evidence="1">Binds 1 zinc ion per subunit.</text>
</comment>
<comment type="pathway">
    <text evidence="1">Carbohydrate biosynthesis; D-glycero-D-manno-heptose 7-phosphate biosynthesis; D-glycero-alpha-D-manno-heptose 7-phosphate and D-glycero-beta-D-manno-heptose 7-phosphate from sedoheptulose 7-phosphate: step 1/1.</text>
</comment>
<comment type="subunit">
    <text evidence="1">Homotetramer.</text>
</comment>
<comment type="subcellular location">
    <subcellularLocation>
        <location evidence="1">Cytoplasm</location>
    </subcellularLocation>
</comment>
<comment type="miscellaneous">
    <text evidence="1">The reaction produces a racemic mixture of D-glycero-alpha-D-manno-heptose 7-phosphate and D-glycero-beta-D-manno-heptose 7-phosphate.</text>
</comment>
<comment type="similarity">
    <text evidence="1">Belongs to the SIS family. GmhA subfamily.</text>
</comment>
<dbReference type="EC" id="5.3.1.28" evidence="1"/>
<dbReference type="EMBL" id="CP000544">
    <property type="protein sequence ID" value="ABM62868.1"/>
    <property type="molecule type" value="Genomic_DNA"/>
</dbReference>
<dbReference type="RefSeq" id="WP_011814890.1">
    <property type="nucleotide sequence ID" value="NC_008789.1"/>
</dbReference>
<dbReference type="SMR" id="A1WYV6"/>
<dbReference type="STRING" id="349124.Hhal_2104"/>
<dbReference type="KEGG" id="hha:Hhal_2104"/>
<dbReference type="eggNOG" id="COG0279">
    <property type="taxonomic scope" value="Bacteria"/>
</dbReference>
<dbReference type="HOGENOM" id="CLU_080999_3_1_6"/>
<dbReference type="OrthoDB" id="9810929at2"/>
<dbReference type="UniPathway" id="UPA00041">
    <property type="reaction ID" value="UER00436"/>
</dbReference>
<dbReference type="Proteomes" id="UP000000647">
    <property type="component" value="Chromosome"/>
</dbReference>
<dbReference type="GO" id="GO:0005737">
    <property type="term" value="C:cytoplasm"/>
    <property type="evidence" value="ECO:0007669"/>
    <property type="project" value="UniProtKB-SubCell"/>
</dbReference>
<dbReference type="GO" id="GO:0097367">
    <property type="term" value="F:carbohydrate derivative binding"/>
    <property type="evidence" value="ECO:0007669"/>
    <property type="project" value="InterPro"/>
</dbReference>
<dbReference type="GO" id="GO:0008968">
    <property type="term" value="F:D-sedoheptulose 7-phosphate isomerase activity"/>
    <property type="evidence" value="ECO:0007669"/>
    <property type="project" value="UniProtKB-UniRule"/>
</dbReference>
<dbReference type="GO" id="GO:0008270">
    <property type="term" value="F:zinc ion binding"/>
    <property type="evidence" value="ECO:0007669"/>
    <property type="project" value="UniProtKB-UniRule"/>
</dbReference>
<dbReference type="GO" id="GO:0005975">
    <property type="term" value="P:carbohydrate metabolic process"/>
    <property type="evidence" value="ECO:0007669"/>
    <property type="project" value="UniProtKB-UniRule"/>
</dbReference>
<dbReference type="GO" id="GO:2001061">
    <property type="term" value="P:D-glycero-D-manno-heptose 7-phosphate biosynthetic process"/>
    <property type="evidence" value="ECO:0007669"/>
    <property type="project" value="UniProtKB-UniPathway"/>
</dbReference>
<dbReference type="CDD" id="cd05006">
    <property type="entry name" value="SIS_GmhA"/>
    <property type="match status" value="1"/>
</dbReference>
<dbReference type="Gene3D" id="3.40.50.10490">
    <property type="entry name" value="Glucose-6-phosphate isomerase like protein, domain 1"/>
    <property type="match status" value="1"/>
</dbReference>
<dbReference type="HAMAP" id="MF_00067">
    <property type="entry name" value="GmhA"/>
    <property type="match status" value="1"/>
</dbReference>
<dbReference type="InterPro" id="IPR035461">
    <property type="entry name" value="GmhA/DiaA"/>
</dbReference>
<dbReference type="InterPro" id="IPR004515">
    <property type="entry name" value="Phosphoheptose_Isoase"/>
</dbReference>
<dbReference type="InterPro" id="IPR001347">
    <property type="entry name" value="SIS_dom"/>
</dbReference>
<dbReference type="InterPro" id="IPR046348">
    <property type="entry name" value="SIS_dom_sf"/>
</dbReference>
<dbReference type="InterPro" id="IPR050099">
    <property type="entry name" value="SIS_GmhA/DiaA_subfam"/>
</dbReference>
<dbReference type="NCBIfam" id="NF010546">
    <property type="entry name" value="PRK13936.1"/>
    <property type="match status" value="1"/>
</dbReference>
<dbReference type="PANTHER" id="PTHR30390:SF6">
    <property type="entry name" value="DNAA INITIATOR-ASSOCIATING PROTEIN DIAA"/>
    <property type="match status" value="1"/>
</dbReference>
<dbReference type="PANTHER" id="PTHR30390">
    <property type="entry name" value="SEDOHEPTULOSE 7-PHOSPHATE ISOMERASE / DNAA INITIATOR-ASSOCIATING FACTOR FOR REPLICATION INITIATION"/>
    <property type="match status" value="1"/>
</dbReference>
<dbReference type="Pfam" id="PF13580">
    <property type="entry name" value="SIS_2"/>
    <property type="match status" value="1"/>
</dbReference>
<dbReference type="SUPFAM" id="SSF53697">
    <property type="entry name" value="SIS domain"/>
    <property type="match status" value="1"/>
</dbReference>
<dbReference type="PROSITE" id="PS51464">
    <property type="entry name" value="SIS"/>
    <property type="match status" value="1"/>
</dbReference>
<feature type="chain" id="PRO_1000009071" description="Phosphoheptose isomerase">
    <location>
        <begin position="1"/>
        <end position="198"/>
    </location>
</feature>
<feature type="domain" description="SIS" evidence="1">
    <location>
        <begin position="36"/>
        <end position="198"/>
    </location>
</feature>
<feature type="binding site" evidence="1">
    <location>
        <begin position="51"/>
        <end position="53"/>
    </location>
    <ligand>
        <name>substrate</name>
    </ligand>
</feature>
<feature type="binding site" evidence="1">
    <location>
        <position position="60"/>
    </location>
    <ligand>
        <name>Zn(2+)</name>
        <dbReference type="ChEBI" id="CHEBI:29105"/>
    </ligand>
</feature>
<feature type="binding site" evidence="1">
    <location>
        <position position="64"/>
    </location>
    <ligand>
        <name>substrate</name>
    </ligand>
</feature>
<feature type="binding site" evidence="1">
    <location>
        <position position="64"/>
    </location>
    <ligand>
        <name>Zn(2+)</name>
        <dbReference type="ChEBI" id="CHEBI:29105"/>
    </ligand>
</feature>
<feature type="binding site" evidence="1">
    <location>
        <begin position="93"/>
        <end position="94"/>
    </location>
    <ligand>
        <name>substrate</name>
    </ligand>
</feature>
<feature type="binding site" evidence="1">
    <location>
        <begin position="119"/>
        <end position="121"/>
    </location>
    <ligand>
        <name>substrate</name>
    </ligand>
</feature>
<feature type="binding site" evidence="1">
    <location>
        <position position="124"/>
    </location>
    <ligand>
        <name>substrate</name>
    </ligand>
</feature>
<feature type="binding site" evidence="1">
    <location>
        <position position="174"/>
    </location>
    <ligand>
        <name>substrate</name>
    </ligand>
</feature>
<feature type="binding site" evidence="1">
    <location>
        <position position="174"/>
    </location>
    <ligand>
        <name>Zn(2+)</name>
        <dbReference type="ChEBI" id="CHEBI:29105"/>
    </ligand>
</feature>
<feature type="binding site" evidence="1">
    <location>
        <position position="182"/>
    </location>
    <ligand>
        <name>Zn(2+)</name>
        <dbReference type="ChEBI" id="CHEBI:29105"/>
    </ligand>
</feature>
<name>GMHA_HALHL</name>
<accession>A1WYV6</accession>
<keyword id="KW-0119">Carbohydrate metabolism</keyword>
<keyword id="KW-0963">Cytoplasm</keyword>
<keyword id="KW-0413">Isomerase</keyword>
<keyword id="KW-0479">Metal-binding</keyword>
<keyword id="KW-1185">Reference proteome</keyword>
<keyword id="KW-0862">Zinc</keyword>
<evidence type="ECO:0000255" key="1">
    <source>
        <dbReference type="HAMAP-Rule" id="MF_00067"/>
    </source>
</evidence>
<protein>
    <recommendedName>
        <fullName evidence="1">Phosphoheptose isomerase</fullName>
        <ecNumber evidence="1">5.3.1.28</ecNumber>
    </recommendedName>
    <alternativeName>
        <fullName evidence="1">Sedoheptulose 7-phosphate isomerase</fullName>
    </alternativeName>
</protein>
<gene>
    <name evidence="1" type="primary">gmhA</name>
    <name type="ordered locus">Hhal_2104</name>
</gene>
<proteinExistence type="inferred from homology"/>
<reference key="1">
    <citation type="submission" date="2006-12" db="EMBL/GenBank/DDBJ databases">
        <title>Complete sequence of Halorhodospira halophila SL1.</title>
        <authorList>
            <consortium name="US DOE Joint Genome Institute"/>
            <person name="Copeland A."/>
            <person name="Lucas S."/>
            <person name="Lapidus A."/>
            <person name="Barry K."/>
            <person name="Detter J.C."/>
            <person name="Glavina del Rio T."/>
            <person name="Hammon N."/>
            <person name="Israni S."/>
            <person name="Dalin E."/>
            <person name="Tice H."/>
            <person name="Pitluck S."/>
            <person name="Saunders E."/>
            <person name="Brettin T."/>
            <person name="Bruce D."/>
            <person name="Han C."/>
            <person name="Tapia R."/>
            <person name="Schmutz J."/>
            <person name="Larimer F."/>
            <person name="Land M."/>
            <person name="Hauser L."/>
            <person name="Kyrpides N."/>
            <person name="Mikhailova N."/>
            <person name="Hoff W."/>
            <person name="Richardson P."/>
        </authorList>
    </citation>
    <scope>NUCLEOTIDE SEQUENCE [LARGE SCALE GENOMIC DNA]</scope>
    <source>
        <strain>DSM 244 / SL1</strain>
    </source>
</reference>
<sequence length="198" mass="21031">MDSHERVAQLFHDSIRAKQDALDRIAPDIVRAGRAMARALGADRKILICGNGGSAADAQHFSSELLNRFEMERPGLPAIALTTDSSTLTSVANDYHYDEVFGRQIRALGHEGDILLAISTSGGSGNIVAAQQAAAERGMITVALSGRDGGTLAETLSAEDIEIRVPSETTARIQEVHLLVIHCLCDLIDRTLFGGPGG</sequence>